<organism>
    <name type="scientific">Acidovorax ebreus (strain TPSY)</name>
    <name type="common">Diaphorobacter sp. (strain TPSY)</name>
    <dbReference type="NCBI Taxonomy" id="535289"/>
    <lineage>
        <taxon>Bacteria</taxon>
        <taxon>Pseudomonadati</taxon>
        <taxon>Pseudomonadota</taxon>
        <taxon>Betaproteobacteria</taxon>
        <taxon>Burkholderiales</taxon>
        <taxon>Comamonadaceae</taxon>
        <taxon>Diaphorobacter</taxon>
    </lineage>
</organism>
<gene>
    <name evidence="1" type="primary">rpsS</name>
    <name type="ordered locus">Dtpsy_0277</name>
</gene>
<reference key="1">
    <citation type="submission" date="2009-01" db="EMBL/GenBank/DDBJ databases">
        <title>Complete sequence of Diaphorobacter sp. TPSY.</title>
        <authorList>
            <consortium name="US DOE Joint Genome Institute"/>
            <person name="Lucas S."/>
            <person name="Copeland A."/>
            <person name="Lapidus A."/>
            <person name="Glavina del Rio T."/>
            <person name="Tice H."/>
            <person name="Bruce D."/>
            <person name="Goodwin L."/>
            <person name="Pitluck S."/>
            <person name="Chertkov O."/>
            <person name="Brettin T."/>
            <person name="Detter J.C."/>
            <person name="Han C."/>
            <person name="Larimer F."/>
            <person name="Land M."/>
            <person name="Hauser L."/>
            <person name="Kyrpides N."/>
            <person name="Mikhailova N."/>
            <person name="Coates J.D."/>
        </authorList>
    </citation>
    <scope>NUCLEOTIDE SEQUENCE [LARGE SCALE GENOMIC DNA]</scope>
    <source>
        <strain>TPSY</strain>
    </source>
</reference>
<protein>
    <recommendedName>
        <fullName evidence="1">Small ribosomal subunit protein uS19</fullName>
    </recommendedName>
    <alternativeName>
        <fullName evidence="2">30S ribosomal protein S19</fullName>
    </alternativeName>
</protein>
<evidence type="ECO:0000255" key="1">
    <source>
        <dbReference type="HAMAP-Rule" id="MF_00531"/>
    </source>
</evidence>
<evidence type="ECO:0000305" key="2"/>
<name>RS19_ACIET</name>
<comment type="function">
    <text evidence="1">Protein S19 forms a complex with S13 that binds strongly to the 16S ribosomal RNA.</text>
</comment>
<comment type="similarity">
    <text evidence="1">Belongs to the universal ribosomal protein uS19 family.</text>
</comment>
<sequence>MTRSLKKGPFVDHHLVAKVEKAIATKDKKPVKTWSRRSMVLPEFIGLTIAVHNGKQHVPVYVTDQMVGHKLGEFALTRTFKGHPADKKVQKK</sequence>
<dbReference type="EMBL" id="CP001392">
    <property type="protein sequence ID" value="ACM31761.1"/>
    <property type="molecule type" value="Genomic_DNA"/>
</dbReference>
<dbReference type="RefSeq" id="WP_011803746.1">
    <property type="nucleotide sequence ID" value="NC_011992.1"/>
</dbReference>
<dbReference type="SMR" id="B9MB77"/>
<dbReference type="GeneID" id="84683208"/>
<dbReference type="KEGG" id="dia:Dtpsy_0277"/>
<dbReference type="eggNOG" id="COG0185">
    <property type="taxonomic scope" value="Bacteria"/>
</dbReference>
<dbReference type="HOGENOM" id="CLU_144911_0_1_4"/>
<dbReference type="Proteomes" id="UP000000450">
    <property type="component" value="Chromosome"/>
</dbReference>
<dbReference type="GO" id="GO:0005737">
    <property type="term" value="C:cytoplasm"/>
    <property type="evidence" value="ECO:0007669"/>
    <property type="project" value="UniProtKB-ARBA"/>
</dbReference>
<dbReference type="GO" id="GO:0015935">
    <property type="term" value="C:small ribosomal subunit"/>
    <property type="evidence" value="ECO:0007669"/>
    <property type="project" value="InterPro"/>
</dbReference>
<dbReference type="GO" id="GO:0019843">
    <property type="term" value="F:rRNA binding"/>
    <property type="evidence" value="ECO:0007669"/>
    <property type="project" value="UniProtKB-UniRule"/>
</dbReference>
<dbReference type="GO" id="GO:0003735">
    <property type="term" value="F:structural constituent of ribosome"/>
    <property type="evidence" value="ECO:0007669"/>
    <property type="project" value="InterPro"/>
</dbReference>
<dbReference type="GO" id="GO:0000028">
    <property type="term" value="P:ribosomal small subunit assembly"/>
    <property type="evidence" value="ECO:0007669"/>
    <property type="project" value="TreeGrafter"/>
</dbReference>
<dbReference type="GO" id="GO:0006412">
    <property type="term" value="P:translation"/>
    <property type="evidence" value="ECO:0007669"/>
    <property type="project" value="UniProtKB-UniRule"/>
</dbReference>
<dbReference type="FunFam" id="3.30.860.10:FF:000001">
    <property type="entry name" value="30S ribosomal protein S19"/>
    <property type="match status" value="1"/>
</dbReference>
<dbReference type="Gene3D" id="3.30.860.10">
    <property type="entry name" value="30s Ribosomal Protein S19, Chain A"/>
    <property type="match status" value="1"/>
</dbReference>
<dbReference type="HAMAP" id="MF_00531">
    <property type="entry name" value="Ribosomal_uS19"/>
    <property type="match status" value="1"/>
</dbReference>
<dbReference type="InterPro" id="IPR002222">
    <property type="entry name" value="Ribosomal_uS19"/>
</dbReference>
<dbReference type="InterPro" id="IPR005732">
    <property type="entry name" value="Ribosomal_uS19_bac-type"/>
</dbReference>
<dbReference type="InterPro" id="IPR020934">
    <property type="entry name" value="Ribosomal_uS19_CS"/>
</dbReference>
<dbReference type="InterPro" id="IPR023575">
    <property type="entry name" value="Ribosomal_uS19_SF"/>
</dbReference>
<dbReference type="NCBIfam" id="TIGR01050">
    <property type="entry name" value="rpsS_bact"/>
    <property type="match status" value="1"/>
</dbReference>
<dbReference type="PANTHER" id="PTHR11880">
    <property type="entry name" value="RIBOSOMAL PROTEIN S19P FAMILY MEMBER"/>
    <property type="match status" value="1"/>
</dbReference>
<dbReference type="PANTHER" id="PTHR11880:SF8">
    <property type="entry name" value="SMALL RIBOSOMAL SUBUNIT PROTEIN US19M"/>
    <property type="match status" value="1"/>
</dbReference>
<dbReference type="Pfam" id="PF00203">
    <property type="entry name" value="Ribosomal_S19"/>
    <property type="match status" value="1"/>
</dbReference>
<dbReference type="PIRSF" id="PIRSF002144">
    <property type="entry name" value="Ribosomal_S19"/>
    <property type="match status" value="1"/>
</dbReference>
<dbReference type="PRINTS" id="PR00975">
    <property type="entry name" value="RIBOSOMALS19"/>
</dbReference>
<dbReference type="SUPFAM" id="SSF54570">
    <property type="entry name" value="Ribosomal protein S19"/>
    <property type="match status" value="1"/>
</dbReference>
<dbReference type="PROSITE" id="PS00323">
    <property type="entry name" value="RIBOSOMAL_S19"/>
    <property type="match status" value="1"/>
</dbReference>
<feature type="chain" id="PRO_1000146388" description="Small ribosomal subunit protein uS19">
    <location>
        <begin position="1"/>
        <end position="92"/>
    </location>
</feature>
<accession>B9MB77</accession>
<keyword id="KW-1185">Reference proteome</keyword>
<keyword id="KW-0687">Ribonucleoprotein</keyword>
<keyword id="KW-0689">Ribosomal protein</keyword>
<keyword id="KW-0694">RNA-binding</keyword>
<keyword id="KW-0699">rRNA-binding</keyword>
<proteinExistence type="inferred from homology"/>